<name>RCAN2_RAT</name>
<dbReference type="EMBL" id="AF459022">
    <property type="protein sequence ID" value="AAO15540.1"/>
    <property type="molecule type" value="mRNA"/>
</dbReference>
<dbReference type="EMBL" id="AF459023">
    <property type="protein sequence ID" value="AAO15541.1"/>
    <property type="molecule type" value="mRNA"/>
</dbReference>
<dbReference type="EMBL" id="BC086974">
    <property type="protein sequence ID" value="AAH86974.1"/>
    <property type="molecule type" value="mRNA"/>
</dbReference>
<dbReference type="RefSeq" id="NP_783168.1">
    <property type="nucleotide sequence ID" value="NM_175578.3"/>
</dbReference>
<dbReference type="RefSeq" id="XP_006244655.1">
    <molecule id="Q8CH27-1"/>
    <property type="nucleotide sequence ID" value="XM_006244593.5"/>
</dbReference>
<dbReference type="SMR" id="Q8CH27"/>
<dbReference type="FunCoup" id="Q8CH27">
    <property type="interactions" value="1259"/>
</dbReference>
<dbReference type="STRING" id="10116.ENSRNOP00000013954"/>
<dbReference type="GlyGen" id="Q8CH27">
    <property type="glycosylation" value="1 site"/>
</dbReference>
<dbReference type="PhosphoSitePlus" id="Q8CH27"/>
<dbReference type="PaxDb" id="10116-ENSRNOP00000013954"/>
<dbReference type="Ensembl" id="ENSRNOT00000029593.5">
    <molecule id="Q8CH27-1"/>
    <property type="protein sequence ID" value="ENSRNOP00000029489.3"/>
    <property type="gene ID" value="ENSRNOG00000010350.8"/>
</dbReference>
<dbReference type="GeneID" id="140666"/>
<dbReference type="KEGG" id="rno:140666"/>
<dbReference type="UCSC" id="RGD:69198">
    <molecule id="Q8CH27-1"/>
    <property type="organism name" value="rat"/>
</dbReference>
<dbReference type="AGR" id="RGD:69198"/>
<dbReference type="CTD" id="10231"/>
<dbReference type="RGD" id="69198">
    <property type="gene designation" value="Rcan2"/>
</dbReference>
<dbReference type="eggNOG" id="KOG4019">
    <property type="taxonomic scope" value="Eukaryota"/>
</dbReference>
<dbReference type="GeneTree" id="ENSGT00940000159767"/>
<dbReference type="HOGENOM" id="CLU_076190_2_1_1"/>
<dbReference type="InParanoid" id="Q8CH27"/>
<dbReference type="OrthoDB" id="17212at2759"/>
<dbReference type="PhylomeDB" id="Q8CH27"/>
<dbReference type="TreeFam" id="TF313579"/>
<dbReference type="PRO" id="PR:Q8CH27"/>
<dbReference type="Proteomes" id="UP000002494">
    <property type="component" value="Chromosome 9"/>
</dbReference>
<dbReference type="Bgee" id="ENSRNOG00000010350">
    <property type="expression patterns" value="Expressed in heart and 20 other cell types or tissues"/>
</dbReference>
<dbReference type="ExpressionAtlas" id="Q8CH27">
    <property type="expression patterns" value="baseline and differential"/>
</dbReference>
<dbReference type="GO" id="GO:0005737">
    <property type="term" value="C:cytoplasm"/>
    <property type="evidence" value="ECO:0000318"/>
    <property type="project" value="GO_Central"/>
</dbReference>
<dbReference type="GO" id="GO:0005634">
    <property type="term" value="C:nucleus"/>
    <property type="evidence" value="ECO:0000318"/>
    <property type="project" value="GO_Central"/>
</dbReference>
<dbReference type="GO" id="GO:0008597">
    <property type="term" value="F:calcium-dependent protein serine/threonine phosphatase regulator activity"/>
    <property type="evidence" value="ECO:0000318"/>
    <property type="project" value="GO_Central"/>
</dbReference>
<dbReference type="GO" id="GO:0003676">
    <property type="term" value="F:nucleic acid binding"/>
    <property type="evidence" value="ECO:0007669"/>
    <property type="project" value="InterPro"/>
</dbReference>
<dbReference type="GO" id="GO:0033173">
    <property type="term" value="P:calcineurin-NFAT signaling cascade"/>
    <property type="evidence" value="ECO:0000266"/>
    <property type="project" value="RGD"/>
</dbReference>
<dbReference type="GO" id="GO:0019722">
    <property type="term" value="P:calcium-mediated signaling"/>
    <property type="evidence" value="ECO:0000318"/>
    <property type="project" value="GO_Central"/>
</dbReference>
<dbReference type="GO" id="GO:0031987">
    <property type="term" value="P:locomotion involved in locomotory behavior"/>
    <property type="evidence" value="ECO:0000266"/>
    <property type="project" value="RGD"/>
</dbReference>
<dbReference type="GO" id="GO:0007219">
    <property type="term" value="P:Notch signaling pathway"/>
    <property type="evidence" value="ECO:0000266"/>
    <property type="project" value="RGD"/>
</dbReference>
<dbReference type="GO" id="GO:0006979">
    <property type="term" value="P:response to oxidative stress"/>
    <property type="evidence" value="ECO:0000266"/>
    <property type="project" value="RGD"/>
</dbReference>
<dbReference type="GO" id="GO:0006950">
    <property type="term" value="P:response to stress"/>
    <property type="evidence" value="ECO:0000266"/>
    <property type="project" value="RGD"/>
</dbReference>
<dbReference type="GO" id="GO:0007614">
    <property type="term" value="P:short-term memory"/>
    <property type="evidence" value="ECO:0000266"/>
    <property type="project" value="RGD"/>
</dbReference>
<dbReference type="CDD" id="cd12709">
    <property type="entry name" value="RRM_RCAN2"/>
    <property type="match status" value="1"/>
</dbReference>
<dbReference type="FunFam" id="3.30.70.330:FF:000092">
    <property type="entry name" value="Calcipressin-2 isoform 2"/>
    <property type="match status" value="1"/>
</dbReference>
<dbReference type="Gene3D" id="3.30.70.330">
    <property type="match status" value="1"/>
</dbReference>
<dbReference type="InterPro" id="IPR006931">
    <property type="entry name" value="Calcipressin"/>
</dbReference>
<dbReference type="InterPro" id="IPR012677">
    <property type="entry name" value="Nucleotide-bd_a/b_plait_sf"/>
</dbReference>
<dbReference type="InterPro" id="IPR035979">
    <property type="entry name" value="RBD_domain_sf"/>
</dbReference>
<dbReference type="InterPro" id="IPR034919">
    <property type="entry name" value="RCAN2_RRM"/>
</dbReference>
<dbReference type="PANTHER" id="PTHR10300">
    <property type="entry name" value="CALCIPRESSIN"/>
    <property type="match status" value="1"/>
</dbReference>
<dbReference type="PANTHER" id="PTHR10300:SF5">
    <property type="entry name" value="CALCIPRESSIN-2"/>
    <property type="match status" value="1"/>
</dbReference>
<dbReference type="Pfam" id="PF04847">
    <property type="entry name" value="Calcipressin"/>
    <property type="match status" value="1"/>
</dbReference>
<dbReference type="SUPFAM" id="SSF54928">
    <property type="entry name" value="RNA-binding domain, RBD"/>
    <property type="match status" value="1"/>
</dbReference>
<comment type="function">
    <text evidence="1">Inhibits calcineurin-dependent transcriptional responses by binding to the catalytic domain of calcineurin A. Could play a role during central nervous system development (By similarity).</text>
</comment>
<comment type="alternative products">
    <event type="alternative splicing"/>
    <isoform>
        <id>Q8CH27-1</id>
        <name>1</name>
        <name>ZAKI-4 alpha</name>
        <sequence type="displayed"/>
    </isoform>
    <isoform>
        <id>Q8CH27-2</id>
        <name>2</name>
        <name>ZAKI-4 beta</name>
        <sequence type="described" ref="VSP_026924"/>
    </isoform>
</comment>
<comment type="similarity">
    <text evidence="6">Belongs to the RCAN family.</text>
</comment>
<gene>
    <name type="primary">Rcan2</name>
    <name type="synonym">Dscr1l1</name>
    <name type="synonym">Zaki4</name>
</gene>
<protein>
    <recommendedName>
        <fullName>Calcipressin-2</fullName>
    </recommendedName>
    <alternativeName>
        <fullName>Calcineurin inhibitory protein ZAKI-4</fullName>
    </alternativeName>
    <alternativeName>
        <fullName>Down syndrome candidate region 1-like protein 1</fullName>
    </alternativeName>
    <alternativeName>
        <fullName>Regulator of calcineurin 2</fullName>
    </alternativeName>
</protein>
<keyword id="KW-0025">Alternative splicing</keyword>
<keyword id="KW-0597">Phosphoprotein</keyword>
<keyword id="KW-1185">Reference proteome</keyword>
<sequence length="197" mass="21991">MPAPSMDCDVSTLVACVVDVEVFTNQEVKEKFEGLFRTYDECVTFQLFKSFRRVRINFSHPKAAARARIELHETQFRGKKLKLYFAQVQTPETDGDKLHLAPPQPAKQFLISPPSSPPVGWKPISDATPVLNYDLLYAVAKLGPGEKYELHAGTESTPSVVVHVCDSDLEEEEDPKTSPKPKIIQTRRPGLPPSVSN</sequence>
<proteinExistence type="evidence at transcript level"/>
<reference key="1">
    <citation type="submission" date="2001-12" db="EMBL/GenBank/DDBJ databases">
        <title>Cloning of rat ZAKI-4 alpha and beta cDNA.</title>
        <authorList>
            <person name="Miyazaki T."/>
            <person name="Cao X."/>
            <person name="Kambe F."/>
            <person name="Ohmori S."/>
            <person name="Seo H."/>
        </authorList>
    </citation>
    <scope>NUCLEOTIDE SEQUENCE [MRNA] (ISOFORMS 1 AND 2)</scope>
    <source>
        <strain>Wistar</strain>
        <tissue>Brain</tissue>
    </source>
</reference>
<reference key="2">
    <citation type="journal article" date="2004" name="Genome Res.">
        <title>The status, quality, and expansion of the NIH full-length cDNA project: the Mammalian Gene Collection (MGC).</title>
        <authorList>
            <consortium name="The MGC Project Team"/>
        </authorList>
    </citation>
    <scope>NUCLEOTIDE SEQUENCE [LARGE SCALE MRNA] (ISOFORM 2)</scope>
    <source>
        <tissue>Heart</tissue>
    </source>
</reference>
<evidence type="ECO:0000250" key="1"/>
<evidence type="ECO:0000250" key="2">
    <source>
        <dbReference type="UniProtKB" id="Q9JHG2"/>
    </source>
</evidence>
<evidence type="ECO:0000256" key="3">
    <source>
        <dbReference type="SAM" id="MobiDB-lite"/>
    </source>
</evidence>
<evidence type="ECO:0000303" key="4">
    <source>
    </source>
</evidence>
<evidence type="ECO:0000303" key="5">
    <source ref="1"/>
</evidence>
<evidence type="ECO:0000305" key="6"/>
<accession>Q8CH27</accession>
<accession>Q8CH26</accession>
<organism>
    <name type="scientific">Rattus norvegicus</name>
    <name type="common">Rat</name>
    <dbReference type="NCBI Taxonomy" id="10116"/>
    <lineage>
        <taxon>Eukaryota</taxon>
        <taxon>Metazoa</taxon>
        <taxon>Chordata</taxon>
        <taxon>Craniata</taxon>
        <taxon>Vertebrata</taxon>
        <taxon>Euteleostomi</taxon>
        <taxon>Mammalia</taxon>
        <taxon>Eutheria</taxon>
        <taxon>Euarchontoglires</taxon>
        <taxon>Glires</taxon>
        <taxon>Rodentia</taxon>
        <taxon>Myomorpha</taxon>
        <taxon>Muroidea</taxon>
        <taxon>Muridae</taxon>
        <taxon>Murinae</taxon>
        <taxon>Rattus</taxon>
    </lineage>
</organism>
<feature type="chain" id="PRO_0000295271" description="Calcipressin-2">
    <location>
        <begin position="1"/>
        <end position="197"/>
    </location>
</feature>
<feature type="region of interest" description="Disordered" evidence="3">
    <location>
        <begin position="166"/>
        <end position="197"/>
    </location>
</feature>
<feature type="modified residue" description="Phosphoserine" evidence="2">
    <location>
        <position position="167"/>
    </location>
</feature>
<feature type="splice variant" id="VSP_026924" description="In isoform 2." evidence="4 5">
    <original>MPAPSMDCDVSTLVACVVDVEVFTNQEV</original>
    <variation>MRGDAYFIGRSLGQQASVPEDGGLFFLCCIDRDWAVTQCFAEEAFQALTDFNDLPNSLFACNVHQSVFEEEES</variation>
    <location>
        <begin position="1"/>
        <end position="28"/>
    </location>
</feature>